<comment type="function">
    <text evidence="2">Calmodulin acts as part of a calcium signal transduction pathway by mediating the control of a large number of enzymes, ion channels, aquaporins and other proteins through calcium-binding. Calcium-binding is required for the activation of calmodulin. Among the enzymes to be stimulated by the calmodulin-calcium complex are a number of protein kinases, such as myosin light-chain kinases and calmodulin-dependent protein kinase type II (CaMK2), and phosphatases. Together with CCP110 and centrin, is involved in a genetic pathway that regulates the centrosome cycle and progression through cytokinesis. Is a regulator of voltage-dependent L-type calcium channels. Mediates calcium-dependent inactivation of CACNA1C. Positively regulates calcium-activated potassium channel activity of KCNN2. Forms a potassium channel complex with KCNQ1 and regulates electrophysiological activity of the channel via calcium-binding. Acts as a sensor to modulate the endoplasmic reticulum contacts with other organelles mediated by VMP1:ATP2A2.</text>
</comment>
<comment type="subunit">
    <text evidence="2 3 5 6 7">Interacts with CEP97, CCP110, TTN/titin and SRY. Interacts with MYO5A and RRAD (By similarity). Interacts with USP6; the interaction is calcium dependent (By similarity). Interacts with CDK5RAP2. Interacts with SCN5A. Interacts with RYR1 and RYR2 (By similarity). Interacts with FCHO1. Interacts with MIP in a 1:2 stoichiometry; the interaction with the cytoplasmic domains from two MIP subunits promotes MIP water channel closure. Interacts with ORAI1; this may play a role in the regulation of ORAI1-mediated calcium transport. Interacts with SYT7 (By similarity). Interacts with MYO10 and MYO1C (By similarity). Interacts with SLC9A1 in a calcium-dependent manner (By similarity). Interacts with HINT1; interaction increases in the presence of calcium ions (By similarity). Interacts with HINT3 (By similarity). Interacts with SLC26A5 (via STAS domain); this interaction is calcium-dependent and the STAS domain interacts with only one lobe of CALM which is an elongated conformation (By similarity). Ca(2+)-bound CALM binds CNGA1:CNGB1 channel (via CaM1 and CaM2 regions); this interaction modulates the affinity of the channel for cNMPs in response to intracellular Ca(2+) levels.</text>
</comment>
<comment type="subcellular location">
    <subcellularLocation>
        <location evidence="1">Cytoplasm</location>
        <location evidence="1">Cytoskeleton</location>
        <location evidence="1">Spindle</location>
    </subcellularLocation>
    <subcellularLocation>
        <location evidence="1">Cytoplasm</location>
        <location evidence="1">Cytoskeleton</location>
        <location evidence="1">Spindle pole</location>
    </subcellularLocation>
    <text evidence="1">Distributed throughout the cell during interphase, but during mitosis becomes dramatically localized to the spindle poles and the spindle microtubules.</text>
</comment>
<comment type="PTM">
    <text evidence="1">Ubiquitination results in a strongly decreased activity.</text>
</comment>
<comment type="PTM">
    <text evidence="1">Phosphorylation results in a decreased activity.</text>
</comment>
<comment type="miscellaneous">
    <text>This protein has four functional calcium-binding sites.</text>
</comment>
<comment type="similarity">
    <text evidence="9">Belongs to the calmodulin family.</text>
</comment>
<accession>Q5RAD2</accession>
<organism>
    <name type="scientific">Pongo abelii</name>
    <name type="common">Sumatran orangutan</name>
    <name type="synonym">Pongo pygmaeus abelii</name>
    <dbReference type="NCBI Taxonomy" id="9601"/>
    <lineage>
        <taxon>Eukaryota</taxon>
        <taxon>Metazoa</taxon>
        <taxon>Chordata</taxon>
        <taxon>Craniata</taxon>
        <taxon>Vertebrata</taxon>
        <taxon>Euteleostomi</taxon>
        <taxon>Mammalia</taxon>
        <taxon>Eutheria</taxon>
        <taxon>Euarchontoglires</taxon>
        <taxon>Primates</taxon>
        <taxon>Haplorrhini</taxon>
        <taxon>Catarrhini</taxon>
        <taxon>Hominidae</taxon>
        <taxon>Pongo</taxon>
    </lineage>
</organism>
<sequence>MADQLTEEQIAEFKEAFSLFDKDGDGTITTKELGTVMRSLGQNPTEAELQDMINEVDADGNGTIDFPEFLTMMARKMKDTDSEEEIREAFRVFDKDGNGYISAAELRHVMTNLGEKLTDEEVDEMIREADIDGDGQVNYEEFVQMMTAK</sequence>
<reference key="1">
    <citation type="submission" date="2004-11" db="EMBL/GenBank/DDBJ databases">
        <authorList>
            <consortium name="The German cDNA consortium"/>
        </authorList>
    </citation>
    <scope>NUCLEOTIDE SEQUENCE [LARGE SCALE MRNA]</scope>
    <source>
        <tissue>Brain cortex</tissue>
        <tissue>Kidney</tissue>
    </source>
</reference>
<dbReference type="EMBL" id="CR859086">
    <property type="protein sequence ID" value="CAH91278.1"/>
    <property type="molecule type" value="mRNA"/>
</dbReference>
<dbReference type="EMBL" id="CR859453">
    <property type="protein sequence ID" value="CAH91624.1"/>
    <property type="molecule type" value="mRNA"/>
</dbReference>
<dbReference type="EMBL" id="CR859976">
    <property type="protein sequence ID" value="CAH92128.1"/>
    <property type="molecule type" value="mRNA"/>
</dbReference>
<dbReference type="EMBL" id="CR861201">
    <property type="protein sequence ID" value="CAH93272.1"/>
    <property type="molecule type" value="mRNA"/>
</dbReference>
<dbReference type="EMBL" id="CR861371">
    <property type="protein sequence ID" value="CAH93431.1"/>
    <property type="molecule type" value="mRNA"/>
</dbReference>
<dbReference type="RefSeq" id="NP_001125955.1">
    <property type="nucleotide sequence ID" value="NM_001132483.1"/>
</dbReference>
<dbReference type="SMR" id="Q5RAD2"/>
<dbReference type="FunCoup" id="Q5RAD2">
    <property type="interactions" value="3646"/>
</dbReference>
<dbReference type="STRING" id="9601.ENSPPYP00000006891"/>
<dbReference type="Ensembl" id="ENSPPYT00000007164.3">
    <property type="protein sequence ID" value="ENSPPYP00000006891.2"/>
    <property type="gene ID" value="ENSPPYG00000006060.3"/>
</dbReference>
<dbReference type="Ensembl" id="ENSPPYT00000011799.3">
    <property type="protein sequence ID" value="ENSPPYP00000011357.3"/>
    <property type="gene ID" value="ENSPPYG00000010154.3"/>
</dbReference>
<dbReference type="Ensembl" id="ENSPPYT00000014441.3">
    <property type="protein sequence ID" value="ENSPPYP00000013880.2"/>
    <property type="gene ID" value="ENSPPYG00000012430.3"/>
</dbReference>
<dbReference type="Ensembl" id="ENSPPYT00000050797.1">
    <property type="protein sequence ID" value="ENSPPYP00000039276.1"/>
    <property type="gene ID" value="ENSPPYG00000006060.3"/>
</dbReference>
<dbReference type="GeneID" id="100172890"/>
<dbReference type="KEGG" id="pon:100172680"/>
<dbReference type="KEGG" id="pon:100172890"/>
<dbReference type="KEGG" id="pon:100173214"/>
<dbReference type="CTD" id="801"/>
<dbReference type="CTD" id="805"/>
<dbReference type="CTD" id="808"/>
<dbReference type="eggNOG" id="KOG0027">
    <property type="taxonomic scope" value="Eukaryota"/>
</dbReference>
<dbReference type="GeneTree" id="ENSGT00950000182980"/>
<dbReference type="HOGENOM" id="CLU_061288_2_0_1"/>
<dbReference type="InParanoid" id="Q5RAD2"/>
<dbReference type="OMA" id="ARKMKEC"/>
<dbReference type="OrthoDB" id="9924840at2759"/>
<dbReference type="TreeFam" id="TF300912"/>
<dbReference type="Proteomes" id="UP000001595">
    <property type="component" value="Chromosome 14"/>
</dbReference>
<dbReference type="Proteomes" id="UP000001595">
    <property type="component" value="Chromosome 19"/>
</dbReference>
<dbReference type="Proteomes" id="UP000001595">
    <property type="component" value="Chromosome 2A"/>
</dbReference>
<dbReference type="GO" id="GO:0034704">
    <property type="term" value="C:calcium channel complex"/>
    <property type="evidence" value="ECO:0007669"/>
    <property type="project" value="Ensembl"/>
</dbReference>
<dbReference type="GO" id="GO:0044305">
    <property type="term" value="C:calyx of Held"/>
    <property type="evidence" value="ECO:0007669"/>
    <property type="project" value="Ensembl"/>
</dbReference>
<dbReference type="GO" id="GO:1902494">
    <property type="term" value="C:catalytic complex"/>
    <property type="evidence" value="ECO:0007669"/>
    <property type="project" value="Ensembl"/>
</dbReference>
<dbReference type="GO" id="GO:0005813">
    <property type="term" value="C:centrosome"/>
    <property type="evidence" value="ECO:0007669"/>
    <property type="project" value="Ensembl"/>
</dbReference>
<dbReference type="GO" id="GO:0043209">
    <property type="term" value="C:myelin sheath"/>
    <property type="evidence" value="ECO:0007669"/>
    <property type="project" value="Ensembl"/>
</dbReference>
<dbReference type="GO" id="GO:0016460">
    <property type="term" value="C:myosin II complex"/>
    <property type="evidence" value="ECO:0007669"/>
    <property type="project" value="TreeGrafter"/>
</dbReference>
<dbReference type="GO" id="GO:0099523">
    <property type="term" value="C:presynaptic cytosol"/>
    <property type="evidence" value="ECO:0007669"/>
    <property type="project" value="Ensembl"/>
</dbReference>
<dbReference type="GO" id="GO:0030017">
    <property type="term" value="C:sarcomere"/>
    <property type="evidence" value="ECO:0007669"/>
    <property type="project" value="Ensembl"/>
</dbReference>
<dbReference type="GO" id="GO:0097225">
    <property type="term" value="C:sperm midpiece"/>
    <property type="evidence" value="ECO:0007669"/>
    <property type="project" value="Ensembl"/>
</dbReference>
<dbReference type="GO" id="GO:0005876">
    <property type="term" value="C:spindle microtubule"/>
    <property type="evidence" value="ECO:0007669"/>
    <property type="project" value="Ensembl"/>
</dbReference>
<dbReference type="GO" id="GO:0000922">
    <property type="term" value="C:spindle pole"/>
    <property type="evidence" value="ECO:0007669"/>
    <property type="project" value="UniProtKB-SubCell"/>
</dbReference>
<dbReference type="GO" id="GO:0031982">
    <property type="term" value="C:vesicle"/>
    <property type="evidence" value="ECO:0007669"/>
    <property type="project" value="Ensembl"/>
</dbReference>
<dbReference type="GO" id="GO:0008076">
    <property type="term" value="C:voltage-gated potassium channel complex"/>
    <property type="evidence" value="ECO:0007669"/>
    <property type="project" value="Ensembl"/>
</dbReference>
<dbReference type="GO" id="GO:0010856">
    <property type="term" value="F:adenylate cyclase activator activity"/>
    <property type="evidence" value="ECO:0007669"/>
    <property type="project" value="Ensembl"/>
</dbReference>
<dbReference type="GO" id="GO:0019855">
    <property type="term" value="F:calcium channel inhibitor activity"/>
    <property type="evidence" value="ECO:0007669"/>
    <property type="project" value="Ensembl"/>
</dbReference>
<dbReference type="GO" id="GO:0005509">
    <property type="term" value="F:calcium ion binding"/>
    <property type="evidence" value="ECO:0007669"/>
    <property type="project" value="Ensembl"/>
</dbReference>
<dbReference type="GO" id="GO:0048306">
    <property type="term" value="F:calcium-dependent protein binding"/>
    <property type="evidence" value="ECO:0007669"/>
    <property type="project" value="Ensembl"/>
</dbReference>
<dbReference type="GO" id="GO:0019901">
    <property type="term" value="F:protein kinase binding"/>
    <property type="evidence" value="ECO:0007669"/>
    <property type="project" value="Ensembl"/>
</dbReference>
<dbReference type="GO" id="GO:0072542">
    <property type="term" value="F:protein phosphatase activator activity"/>
    <property type="evidence" value="ECO:0007669"/>
    <property type="project" value="Ensembl"/>
</dbReference>
<dbReference type="GO" id="GO:0043539">
    <property type="term" value="F:protein serine/threonine kinase activator activity"/>
    <property type="evidence" value="ECO:0007669"/>
    <property type="project" value="Ensembl"/>
</dbReference>
<dbReference type="GO" id="GO:0031432">
    <property type="term" value="F:titin binding"/>
    <property type="evidence" value="ECO:0007669"/>
    <property type="project" value="Ensembl"/>
</dbReference>
<dbReference type="GO" id="GO:0044325">
    <property type="term" value="F:transmembrane transporter binding"/>
    <property type="evidence" value="ECO:0007669"/>
    <property type="project" value="Ensembl"/>
</dbReference>
<dbReference type="GO" id="GO:0016240">
    <property type="term" value="P:autophagosome membrane docking"/>
    <property type="evidence" value="ECO:0007669"/>
    <property type="project" value="Ensembl"/>
</dbReference>
<dbReference type="GO" id="GO:0097720">
    <property type="term" value="P:calcineurin-mediated signaling"/>
    <property type="evidence" value="ECO:0007669"/>
    <property type="project" value="Ensembl"/>
</dbReference>
<dbReference type="GO" id="GO:0035458">
    <property type="term" value="P:cellular response to interferon-beta"/>
    <property type="evidence" value="ECO:0007669"/>
    <property type="project" value="Ensembl"/>
</dbReference>
<dbReference type="GO" id="GO:0071346">
    <property type="term" value="P:cellular response to type II interferon"/>
    <property type="evidence" value="ECO:0007669"/>
    <property type="project" value="Ensembl"/>
</dbReference>
<dbReference type="GO" id="GO:0005513">
    <property type="term" value="P:detection of calcium ion"/>
    <property type="evidence" value="ECO:0007669"/>
    <property type="project" value="Ensembl"/>
</dbReference>
<dbReference type="GO" id="GO:0000086">
    <property type="term" value="P:G2/M transition of mitotic cell cycle"/>
    <property type="evidence" value="ECO:0007669"/>
    <property type="project" value="Ensembl"/>
</dbReference>
<dbReference type="GO" id="GO:1990456">
    <property type="term" value="P:mitochondrion-endoplasmic reticulum membrane tethering"/>
    <property type="evidence" value="ECO:0007669"/>
    <property type="project" value="Ensembl"/>
</dbReference>
<dbReference type="GO" id="GO:1905913">
    <property type="term" value="P:negative regulation of calcium ion export across plasma membrane"/>
    <property type="evidence" value="ECO:0007669"/>
    <property type="project" value="Ensembl"/>
</dbReference>
<dbReference type="GO" id="GO:0046427">
    <property type="term" value="P:positive regulation of receptor signaling pathway via JAK-STAT"/>
    <property type="evidence" value="ECO:0007669"/>
    <property type="project" value="Ensembl"/>
</dbReference>
<dbReference type="GO" id="GO:0140238">
    <property type="term" value="P:presynaptic endocytosis"/>
    <property type="evidence" value="ECO:0007669"/>
    <property type="project" value="Ensembl"/>
</dbReference>
<dbReference type="GO" id="GO:0050848">
    <property type="term" value="P:regulation of calcium-mediated signaling"/>
    <property type="evidence" value="ECO:0007669"/>
    <property type="project" value="Ensembl"/>
</dbReference>
<dbReference type="GO" id="GO:0098901">
    <property type="term" value="P:regulation of cardiac muscle cell action potential"/>
    <property type="evidence" value="ECO:0007669"/>
    <property type="project" value="Ensembl"/>
</dbReference>
<dbReference type="GO" id="GO:0055117">
    <property type="term" value="P:regulation of cardiac muscle contraction"/>
    <property type="evidence" value="ECO:0007669"/>
    <property type="project" value="Ensembl"/>
</dbReference>
<dbReference type="GO" id="GO:0032465">
    <property type="term" value="P:regulation of cytokinesis"/>
    <property type="evidence" value="ECO:0007669"/>
    <property type="project" value="Ensembl"/>
</dbReference>
<dbReference type="GO" id="GO:0002027">
    <property type="term" value="P:regulation of heart rate"/>
    <property type="evidence" value="ECO:0007669"/>
    <property type="project" value="Ensembl"/>
</dbReference>
<dbReference type="GO" id="GO:0010880">
    <property type="term" value="P:regulation of release of sequestered calcium ion into cytosol by sarcoplasmic reticulum"/>
    <property type="evidence" value="ECO:0007669"/>
    <property type="project" value="Ensembl"/>
</dbReference>
<dbReference type="CDD" id="cd00051">
    <property type="entry name" value="EFh"/>
    <property type="match status" value="2"/>
</dbReference>
<dbReference type="FunFam" id="1.10.238.10:FF:000527">
    <property type="entry name" value="Calmodulin-3"/>
    <property type="match status" value="1"/>
</dbReference>
<dbReference type="Gene3D" id="1.10.238.10">
    <property type="entry name" value="EF-hand"/>
    <property type="match status" value="3"/>
</dbReference>
<dbReference type="InterPro" id="IPR050230">
    <property type="entry name" value="CALM/Myosin/TropC-like"/>
</dbReference>
<dbReference type="InterPro" id="IPR011992">
    <property type="entry name" value="EF-hand-dom_pair"/>
</dbReference>
<dbReference type="InterPro" id="IPR018247">
    <property type="entry name" value="EF_Hand_1_Ca_BS"/>
</dbReference>
<dbReference type="InterPro" id="IPR002048">
    <property type="entry name" value="EF_hand_dom"/>
</dbReference>
<dbReference type="PANTHER" id="PTHR23048:SF0">
    <property type="entry name" value="CALMODULIN LIKE 3"/>
    <property type="match status" value="1"/>
</dbReference>
<dbReference type="PANTHER" id="PTHR23048">
    <property type="entry name" value="MYOSIN LIGHT CHAIN 1, 3"/>
    <property type="match status" value="1"/>
</dbReference>
<dbReference type="Pfam" id="PF13499">
    <property type="entry name" value="EF-hand_7"/>
    <property type="match status" value="2"/>
</dbReference>
<dbReference type="PRINTS" id="PR00450">
    <property type="entry name" value="RECOVERIN"/>
</dbReference>
<dbReference type="SMART" id="SM00054">
    <property type="entry name" value="EFh"/>
    <property type="match status" value="4"/>
</dbReference>
<dbReference type="SUPFAM" id="SSF47473">
    <property type="entry name" value="EF-hand"/>
    <property type="match status" value="1"/>
</dbReference>
<dbReference type="PROSITE" id="PS00018">
    <property type="entry name" value="EF_HAND_1"/>
    <property type="match status" value="4"/>
</dbReference>
<dbReference type="PROSITE" id="PS50222">
    <property type="entry name" value="EF_HAND_2"/>
    <property type="match status" value="4"/>
</dbReference>
<proteinExistence type="evidence at transcript level"/>
<keyword id="KW-0007">Acetylation</keyword>
<keyword id="KW-0106">Calcium</keyword>
<keyword id="KW-0963">Cytoplasm</keyword>
<keyword id="KW-0206">Cytoskeleton</keyword>
<keyword id="KW-1017">Isopeptide bond</keyword>
<keyword id="KW-0479">Metal-binding</keyword>
<keyword id="KW-0488">Methylation</keyword>
<keyword id="KW-0597">Phosphoprotein</keyword>
<keyword id="KW-1185">Reference proteome</keyword>
<keyword id="KW-0677">Repeat</keyword>
<keyword id="KW-0832">Ubl conjugation</keyword>
<feature type="initiator methionine" description="Removed" evidence="5">
    <location>
        <position position="1"/>
    </location>
</feature>
<feature type="chain" id="PRO_0000198225" description="Calmodulin">
    <location>
        <begin position="2"/>
        <end position="149"/>
    </location>
</feature>
<feature type="domain" description="EF-hand 1" evidence="8">
    <location>
        <begin position="8"/>
        <end position="43"/>
    </location>
</feature>
<feature type="domain" description="EF-hand 2" evidence="8">
    <location>
        <begin position="44"/>
        <end position="79"/>
    </location>
</feature>
<feature type="domain" description="EF-hand 3" evidence="8">
    <location>
        <begin position="81"/>
        <end position="116"/>
    </location>
</feature>
<feature type="domain" description="EF-hand 4" evidence="8">
    <location>
        <begin position="117"/>
        <end position="149"/>
    </location>
</feature>
<feature type="binding site" evidence="8">
    <location>
        <position position="21"/>
    </location>
    <ligand>
        <name>Ca(2+)</name>
        <dbReference type="ChEBI" id="CHEBI:29108"/>
        <label>1</label>
    </ligand>
</feature>
<feature type="binding site" evidence="8">
    <location>
        <position position="23"/>
    </location>
    <ligand>
        <name>Ca(2+)</name>
        <dbReference type="ChEBI" id="CHEBI:29108"/>
        <label>1</label>
    </ligand>
</feature>
<feature type="binding site" evidence="8">
    <location>
        <position position="25"/>
    </location>
    <ligand>
        <name>Ca(2+)</name>
        <dbReference type="ChEBI" id="CHEBI:29108"/>
        <label>1</label>
    </ligand>
</feature>
<feature type="binding site" evidence="8">
    <location>
        <position position="27"/>
    </location>
    <ligand>
        <name>Ca(2+)</name>
        <dbReference type="ChEBI" id="CHEBI:29108"/>
        <label>1</label>
    </ligand>
</feature>
<feature type="binding site" evidence="8">
    <location>
        <position position="32"/>
    </location>
    <ligand>
        <name>Ca(2+)</name>
        <dbReference type="ChEBI" id="CHEBI:29108"/>
        <label>1</label>
    </ligand>
</feature>
<feature type="binding site" evidence="8">
    <location>
        <position position="57"/>
    </location>
    <ligand>
        <name>Ca(2+)</name>
        <dbReference type="ChEBI" id="CHEBI:29108"/>
        <label>2</label>
    </ligand>
</feature>
<feature type="binding site" evidence="8">
    <location>
        <position position="59"/>
    </location>
    <ligand>
        <name>Ca(2+)</name>
        <dbReference type="ChEBI" id="CHEBI:29108"/>
        <label>2</label>
    </ligand>
</feature>
<feature type="binding site" evidence="8">
    <location>
        <position position="61"/>
    </location>
    <ligand>
        <name>Ca(2+)</name>
        <dbReference type="ChEBI" id="CHEBI:29108"/>
        <label>2</label>
    </ligand>
</feature>
<feature type="binding site" evidence="8">
    <location>
        <position position="63"/>
    </location>
    <ligand>
        <name>Ca(2+)</name>
        <dbReference type="ChEBI" id="CHEBI:29108"/>
        <label>2</label>
    </ligand>
</feature>
<feature type="binding site" evidence="8">
    <location>
        <position position="68"/>
    </location>
    <ligand>
        <name>Ca(2+)</name>
        <dbReference type="ChEBI" id="CHEBI:29108"/>
        <label>2</label>
    </ligand>
</feature>
<feature type="binding site" evidence="8">
    <location>
        <position position="94"/>
    </location>
    <ligand>
        <name>Ca(2+)</name>
        <dbReference type="ChEBI" id="CHEBI:29108"/>
        <label>3</label>
    </ligand>
</feature>
<feature type="binding site" evidence="8">
    <location>
        <position position="96"/>
    </location>
    <ligand>
        <name>Ca(2+)</name>
        <dbReference type="ChEBI" id="CHEBI:29108"/>
        <label>3</label>
    </ligand>
</feature>
<feature type="binding site" evidence="8">
    <location>
        <position position="98"/>
    </location>
    <ligand>
        <name>Ca(2+)</name>
        <dbReference type="ChEBI" id="CHEBI:29108"/>
        <label>3</label>
    </ligand>
</feature>
<feature type="binding site" evidence="8">
    <location>
        <position position="100"/>
    </location>
    <ligand>
        <name>Ca(2+)</name>
        <dbReference type="ChEBI" id="CHEBI:29108"/>
        <label>3</label>
    </ligand>
</feature>
<feature type="binding site" evidence="8">
    <location>
        <position position="105"/>
    </location>
    <ligand>
        <name>Ca(2+)</name>
        <dbReference type="ChEBI" id="CHEBI:29108"/>
        <label>3</label>
    </ligand>
</feature>
<feature type="binding site" evidence="8">
    <location>
        <position position="130"/>
    </location>
    <ligand>
        <name>Ca(2+)</name>
        <dbReference type="ChEBI" id="CHEBI:29108"/>
        <label>4</label>
    </ligand>
</feature>
<feature type="binding site" evidence="8">
    <location>
        <position position="132"/>
    </location>
    <ligand>
        <name>Ca(2+)</name>
        <dbReference type="ChEBI" id="CHEBI:29108"/>
        <label>4</label>
    </ligand>
</feature>
<feature type="binding site" evidence="8">
    <location>
        <position position="134"/>
    </location>
    <ligand>
        <name>Ca(2+)</name>
        <dbReference type="ChEBI" id="CHEBI:29108"/>
        <label>4</label>
    </ligand>
</feature>
<feature type="binding site" evidence="8">
    <location>
        <position position="136"/>
    </location>
    <ligand>
        <name>Ca(2+)</name>
        <dbReference type="ChEBI" id="CHEBI:29108"/>
        <label>4</label>
    </ligand>
</feature>
<feature type="binding site" evidence="8">
    <location>
        <position position="141"/>
    </location>
    <ligand>
        <name>Ca(2+)</name>
        <dbReference type="ChEBI" id="CHEBI:29108"/>
        <label>4</label>
    </ligand>
</feature>
<feature type="modified residue" description="N-acetylalanine" evidence="5">
    <location>
        <position position="2"/>
    </location>
</feature>
<feature type="modified residue" description="N6-acetyllysine; alternate" evidence="2">
    <location>
        <position position="22"/>
    </location>
</feature>
<feature type="modified residue" description="Phosphothreonine; by CaMK4" evidence="4">
    <location>
        <position position="45"/>
    </location>
</feature>
<feature type="modified residue" description="Phosphoserine" evidence="2">
    <location>
        <position position="82"/>
    </location>
</feature>
<feature type="modified residue" description="N6-acetyllysine" evidence="2">
    <location>
        <position position="95"/>
    </location>
</feature>
<feature type="modified residue" description="Phosphotyrosine" evidence="2">
    <location>
        <position position="100"/>
    </location>
</feature>
<feature type="modified residue" description="Phosphoserine" evidence="2">
    <location>
        <position position="102"/>
    </location>
</feature>
<feature type="modified residue" description="Phosphothreonine" evidence="2">
    <location>
        <position position="111"/>
    </location>
</feature>
<feature type="modified residue" description="N6,N6,N6-trimethyllysine; alternate" evidence="5">
    <location>
        <position position="116"/>
    </location>
</feature>
<feature type="modified residue" description="N6-methyllysine; alternate" evidence="2">
    <location>
        <position position="116"/>
    </location>
</feature>
<feature type="modified residue" description="Phosphotyrosine" evidence="2">
    <location>
        <position position="139"/>
    </location>
</feature>
<feature type="cross-link" description="Glycyl lysine isopeptide (Lys-Gly) (interchain with G-Cter in SUMO2); alternate" evidence="2">
    <location>
        <position position="22"/>
    </location>
</feature>
<feature type="cross-link" description="Glycyl lysine isopeptide (Lys-Gly) (interchain with G-Cter in ubiquitin); alternate" evidence="5">
    <location>
        <position position="22"/>
    </location>
</feature>
<protein>
    <recommendedName>
        <fullName>Calmodulin</fullName>
        <shortName>CaM</shortName>
    </recommendedName>
</protein>
<gene>
    <name type="primary">CALM</name>
</gene>
<evidence type="ECO:0000250" key="1"/>
<evidence type="ECO:0000250" key="2">
    <source>
        <dbReference type="UniProtKB" id="P0DP23"/>
    </source>
</evidence>
<evidence type="ECO:0000250" key="3">
    <source>
        <dbReference type="UniProtKB" id="P0DP26"/>
    </source>
</evidence>
<evidence type="ECO:0000250" key="4">
    <source>
        <dbReference type="UniProtKB" id="P0DP29"/>
    </source>
</evidence>
<evidence type="ECO:0000250" key="5">
    <source>
        <dbReference type="UniProtKB" id="P62157"/>
    </source>
</evidence>
<evidence type="ECO:0000250" key="6">
    <source>
        <dbReference type="UniProtKB" id="P62158"/>
    </source>
</evidence>
<evidence type="ECO:0000250" key="7">
    <source>
        <dbReference type="UniProtKB" id="P62204"/>
    </source>
</evidence>
<evidence type="ECO:0000255" key="8">
    <source>
        <dbReference type="PROSITE-ProRule" id="PRU00448"/>
    </source>
</evidence>
<evidence type="ECO:0000305" key="9"/>
<name>CALM_PONAB</name>